<accession>C5A0C2</accession>
<protein>
    <recommendedName>
        <fullName evidence="1">Phosphoenolpyruvate carboxylase</fullName>
        <shortName evidence="1">PEPC</shortName>
        <shortName evidence="1">PEPCase</shortName>
        <ecNumber evidence="1">4.1.1.31</ecNumber>
    </recommendedName>
</protein>
<organism>
    <name type="scientific">Escherichia coli (strain K12 / MC4100 / BW2952)</name>
    <dbReference type="NCBI Taxonomy" id="595496"/>
    <lineage>
        <taxon>Bacteria</taxon>
        <taxon>Pseudomonadati</taxon>
        <taxon>Pseudomonadota</taxon>
        <taxon>Gammaproteobacteria</taxon>
        <taxon>Enterobacterales</taxon>
        <taxon>Enterobacteriaceae</taxon>
        <taxon>Escherichia</taxon>
    </lineage>
</organism>
<reference key="1">
    <citation type="journal article" date="2009" name="J. Bacteriol.">
        <title>Genomic sequencing reveals regulatory mutations and recombinational events in the widely used MC4100 lineage of Escherichia coli K-12.</title>
        <authorList>
            <person name="Ferenci T."/>
            <person name="Zhou Z."/>
            <person name="Betteridge T."/>
            <person name="Ren Y."/>
            <person name="Liu Y."/>
            <person name="Feng L."/>
            <person name="Reeves P.R."/>
            <person name="Wang L."/>
        </authorList>
    </citation>
    <scope>NUCLEOTIDE SEQUENCE [LARGE SCALE GENOMIC DNA]</scope>
    <source>
        <strain>K12 / MC4100 / BW2952</strain>
    </source>
</reference>
<dbReference type="EC" id="4.1.1.31" evidence="1"/>
<dbReference type="EMBL" id="CP001396">
    <property type="protein sequence ID" value="ACR64037.1"/>
    <property type="molecule type" value="Genomic_DNA"/>
</dbReference>
<dbReference type="RefSeq" id="WP_001005586.1">
    <property type="nucleotide sequence ID" value="NC_012759.1"/>
</dbReference>
<dbReference type="SMR" id="C5A0C2"/>
<dbReference type="KEGG" id="ebw:BWG_3624"/>
<dbReference type="HOGENOM" id="CLU_006557_2_0_6"/>
<dbReference type="GO" id="GO:0005829">
    <property type="term" value="C:cytosol"/>
    <property type="evidence" value="ECO:0007669"/>
    <property type="project" value="TreeGrafter"/>
</dbReference>
<dbReference type="GO" id="GO:0000287">
    <property type="term" value="F:magnesium ion binding"/>
    <property type="evidence" value="ECO:0007669"/>
    <property type="project" value="UniProtKB-UniRule"/>
</dbReference>
<dbReference type="GO" id="GO:0008964">
    <property type="term" value="F:phosphoenolpyruvate carboxylase activity"/>
    <property type="evidence" value="ECO:0007669"/>
    <property type="project" value="UniProtKB-UniRule"/>
</dbReference>
<dbReference type="GO" id="GO:0015977">
    <property type="term" value="P:carbon fixation"/>
    <property type="evidence" value="ECO:0007669"/>
    <property type="project" value="UniProtKB-UniRule"/>
</dbReference>
<dbReference type="GO" id="GO:0006107">
    <property type="term" value="P:oxaloacetate metabolic process"/>
    <property type="evidence" value="ECO:0007669"/>
    <property type="project" value="UniProtKB-UniRule"/>
</dbReference>
<dbReference type="GO" id="GO:0006099">
    <property type="term" value="P:tricarboxylic acid cycle"/>
    <property type="evidence" value="ECO:0007669"/>
    <property type="project" value="InterPro"/>
</dbReference>
<dbReference type="FunFam" id="1.20.1440.90:FF:000002">
    <property type="entry name" value="Phosphoenolpyruvate carboxylase"/>
    <property type="match status" value="1"/>
</dbReference>
<dbReference type="Gene3D" id="1.20.1440.90">
    <property type="entry name" value="Phosphoenolpyruvate/pyruvate domain"/>
    <property type="match status" value="1"/>
</dbReference>
<dbReference type="HAMAP" id="MF_00595">
    <property type="entry name" value="PEPcase_type1"/>
    <property type="match status" value="1"/>
</dbReference>
<dbReference type="InterPro" id="IPR021135">
    <property type="entry name" value="PEP_COase"/>
</dbReference>
<dbReference type="InterPro" id="IPR022805">
    <property type="entry name" value="PEP_COase_bac/pln-type"/>
</dbReference>
<dbReference type="InterPro" id="IPR018129">
    <property type="entry name" value="PEP_COase_Lys_AS"/>
</dbReference>
<dbReference type="InterPro" id="IPR033129">
    <property type="entry name" value="PEPCASE_His_AS"/>
</dbReference>
<dbReference type="InterPro" id="IPR015813">
    <property type="entry name" value="Pyrv/PenolPyrv_kinase-like_dom"/>
</dbReference>
<dbReference type="NCBIfam" id="NF000584">
    <property type="entry name" value="PRK00009.1"/>
    <property type="match status" value="1"/>
</dbReference>
<dbReference type="PANTHER" id="PTHR30523">
    <property type="entry name" value="PHOSPHOENOLPYRUVATE CARBOXYLASE"/>
    <property type="match status" value="1"/>
</dbReference>
<dbReference type="PANTHER" id="PTHR30523:SF6">
    <property type="entry name" value="PHOSPHOENOLPYRUVATE CARBOXYLASE"/>
    <property type="match status" value="1"/>
</dbReference>
<dbReference type="Pfam" id="PF00311">
    <property type="entry name" value="PEPcase"/>
    <property type="match status" value="1"/>
</dbReference>
<dbReference type="PRINTS" id="PR00150">
    <property type="entry name" value="PEPCARBXLASE"/>
</dbReference>
<dbReference type="SUPFAM" id="SSF51621">
    <property type="entry name" value="Phosphoenolpyruvate/pyruvate domain"/>
    <property type="match status" value="1"/>
</dbReference>
<dbReference type="PROSITE" id="PS00781">
    <property type="entry name" value="PEPCASE_1"/>
    <property type="match status" value="1"/>
</dbReference>
<dbReference type="PROSITE" id="PS00393">
    <property type="entry name" value="PEPCASE_2"/>
    <property type="match status" value="1"/>
</dbReference>
<feature type="chain" id="PRO_1000212176" description="Phosphoenolpyruvate carboxylase">
    <location>
        <begin position="1"/>
        <end position="883"/>
    </location>
</feature>
<feature type="active site" evidence="1">
    <location>
        <position position="138"/>
    </location>
</feature>
<feature type="active site" evidence="1">
    <location>
        <position position="546"/>
    </location>
</feature>
<comment type="function">
    <text evidence="1">Forms oxaloacetate, a four-carbon dicarboxylic acid source for the tricarboxylic acid cycle.</text>
</comment>
<comment type="catalytic activity">
    <reaction evidence="1">
        <text>oxaloacetate + phosphate = phosphoenolpyruvate + hydrogencarbonate</text>
        <dbReference type="Rhea" id="RHEA:28370"/>
        <dbReference type="ChEBI" id="CHEBI:16452"/>
        <dbReference type="ChEBI" id="CHEBI:17544"/>
        <dbReference type="ChEBI" id="CHEBI:43474"/>
        <dbReference type="ChEBI" id="CHEBI:58702"/>
        <dbReference type="EC" id="4.1.1.31"/>
    </reaction>
</comment>
<comment type="cofactor">
    <cofactor evidence="1">
        <name>Mg(2+)</name>
        <dbReference type="ChEBI" id="CHEBI:18420"/>
    </cofactor>
</comment>
<comment type="similarity">
    <text evidence="1">Belongs to the PEPCase type 1 family.</text>
</comment>
<gene>
    <name evidence="1" type="primary">ppc</name>
    <name type="ordered locus">BWG_3624</name>
</gene>
<proteinExistence type="inferred from homology"/>
<sequence>MNEQYSALRSNVSMLGKVLGETIKDALGEHILERVETIRKLSKSSRAGNDANRQELLTTLQNLSNDELLPVARAFSQFLNLANTAEQYHSISPKGEAASNPEVIARTLRKLKNQPELSEDTIKKAVESLSLELVLTAHPTEITRRTLIHKMVEVNACLKQLDNKDIADYEHNQLMRRLRQLIAQSWHTDEIRKLRPSPVDEAKWGFAVVENSLWQGVPNYLRELNEQLEENLGYKLPVEFVPVRFTSWMGGDRDGNPNVTADITRHVLLLSRWKATDLFLKDIQVLVSELSMVEATPELLALVGEEGAAEPYRYLMKNLRSRLMATQAWLEARLKGEELPKPEGLLTQNEELWEPLYACYQSLQACGMGIIANGDLLDTLRRVKCFGVPLVRIDIRQESTRHTEALGELTRYLGIGDYESWSEADKQAFLIRELNSKRPLLPRNWQPSAETREVLDTCQVIAEAPQGSIAAYVISMAKTPSDVLAVHLLLKEAGIGFAMPVAPLFETLDDLNNANDVMTQLLNIDWYRGLIQGKQMVMIGYSDSAKDAGVMAASWAQYQAQDALIKTCEKAGIELTLFHGRGGSIGRGGAPAHAALLSQPPGSLKGGLRVTEQGEMIRFKYGLPEITVSSLSLYTGAILEANLLPPPEPKESWRRIMDELSVISCDVYRGYVRENKDFVPYFRSATPEQELGKLPLGSRPAKRRPTGGVESLRAIPWIFAWTQNRLMLPAWLGAGTALQKVVEDGKQSELEAMCRDWPFFSTRLGMLEMVFAKADLWLAEYYDQRLVDKALWPLGKELRNLQEEDIKVVLAIANDSHLMADLPWIAESIQLRNIYTDPLNVLQAELLHRSRQAEKEGQEPDPRVEQALMVTIAGIAAGMRNTG</sequence>
<keyword id="KW-0120">Carbon dioxide fixation</keyword>
<keyword id="KW-0456">Lyase</keyword>
<keyword id="KW-0460">Magnesium</keyword>
<name>CAPP_ECOBW</name>
<evidence type="ECO:0000255" key="1">
    <source>
        <dbReference type="HAMAP-Rule" id="MF_00595"/>
    </source>
</evidence>